<organism>
    <name type="scientific">Antirrhinum majus</name>
    <name type="common">Garden snapdragon</name>
    <dbReference type="NCBI Taxonomy" id="4151"/>
    <lineage>
        <taxon>Eukaryota</taxon>
        <taxon>Viridiplantae</taxon>
        <taxon>Streptophyta</taxon>
        <taxon>Embryophyta</taxon>
        <taxon>Tracheophyta</taxon>
        <taxon>Spermatophyta</taxon>
        <taxon>Magnoliopsida</taxon>
        <taxon>eudicotyledons</taxon>
        <taxon>Gunneridae</taxon>
        <taxon>Pentapetalae</taxon>
        <taxon>asterids</taxon>
        <taxon>lamiids</taxon>
        <taxon>Lamiales</taxon>
        <taxon>Plantaginaceae</taxon>
        <taxon>Antirrhineae</taxon>
        <taxon>Antirrhinum</taxon>
    </lineage>
</organism>
<gene>
    <name type="primary">WUS</name>
    <name type="synonym">ROA</name>
</gene>
<name>WUS_ANTMA</name>
<dbReference type="EMBL" id="AY162209">
    <property type="protein sequence ID" value="AAO23113.1"/>
    <property type="molecule type" value="mRNA"/>
</dbReference>
<dbReference type="SMR" id="Q6YBV1"/>
<dbReference type="GO" id="GO:0005634">
    <property type="term" value="C:nucleus"/>
    <property type="evidence" value="ECO:0007669"/>
    <property type="project" value="UniProtKB-SubCell"/>
</dbReference>
<dbReference type="GO" id="GO:0003677">
    <property type="term" value="F:DNA binding"/>
    <property type="evidence" value="ECO:0007669"/>
    <property type="project" value="UniProtKB-KW"/>
</dbReference>
<dbReference type="GO" id="GO:0003700">
    <property type="term" value="F:DNA-binding transcription factor activity"/>
    <property type="evidence" value="ECO:0007669"/>
    <property type="project" value="InterPro"/>
</dbReference>
<dbReference type="GO" id="GO:0030154">
    <property type="term" value="P:cell differentiation"/>
    <property type="evidence" value="ECO:0007669"/>
    <property type="project" value="UniProtKB-KW"/>
</dbReference>
<dbReference type="GO" id="GO:0009908">
    <property type="term" value="P:flower development"/>
    <property type="evidence" value="ECO:0007669"/>
    <property type="project" value="UniProtKB-KW"/>
</dbReference>
<dbReference type="GO" id="GO:0099402">
    <property type="term" value="P:plant organ development"/>
    <property type="evidence" value="ECO:0007669"/>
    <property type="project" value="InterPro"/>
</dbReference>
<dbReference type="CDD" id="cd00086">
    <property type="entry name" value="homeodomain"/>
    <property type="match status" value="1"/>
</dbReference>
<dbReference type="Gene3D" id="1.10.10.60">
    <property type="entry name" value="Homeodomain-like"/>
    <property type="match status" value="1"/>
</dbReference>
<dbReference type="InterPro" id="IPR001356">
    <property type="entry name" value="HD"/>
</dbReference>
<dbReference type="InterPro" id="IPR009057">
    <property type="entry name" value="Homeodomain-like_sf"/>
</dbReference>
<dbReference type="InterPro" id="IPR044555">
    <property type="entry name" value="WUSCHEL-like"/>
</dbReference>
<dbReference type="PANTHER" id="PTHR45940:SF2">
    <property type="entry name" value="WUSCHEL-RELATED HOMEOBOX 1"/>
    <property type="match status" value="1"/>
</dbReference>
<dbReference type="PANTHER" id="PTHR45940">
    <property type="entry name" value="WUSCHEL-RELATED HOMEOBOX 1-RELATED"/>
    <property type="match status" value="1"/>
</dbReference>
<dbReference type="Pfam" id="PF00046">
    <property type="entry name" value="Homeodomain"/>
    <property type="match status" value="1"/>
</dbReference>
<dbReference type="SMART" id="SM00389">
    <property type="entry name" value="HOX"/>
    <property type="match status" value="1"/>
</dbReference>
<dbReference type="SUPFAM" id="SSF46689">
    <property type="entry name" value="Homeodomain-like"/>
    <property type="match status" value="1"/>
</dbReference>
<dbReference type="PROSITE" id="PS50071">
    <property type="entry name" value="HOMEOBOX_2"/>
    <property type="match status" value="1"/>
</dbReference>
<accession>Q6YBV1</accession>
<sequence length="281" mass="32027">MEPQQQQQQQGNEQQDSQGIGKINNGSGGSSFLCRQSSTRWTPTTDQIRILKDLYYNNGVRSPTAEQIQRISAKLRQYGKIEGKNVFYWFQNHKARERQKKRFTADHHHHMNVPTIHNHHYKPPPVYNKFSNMNSGSFPSSSNGSPGFLTTPGSHVGNYGYGSVAMEKSFRECTISSTTDANVGGSMSQNIAWIGINNEYHNPYTFIDTRKYMNGYDQTLEIEEEAEENYTAEIETLPLFPMHADIKQDTADYFNGRLENGCPRASLELTLNSWFGNSKYN</sequence>
<protein>
    <recommendedName>
        <fullName>Protein WUSCHEL</fullName>
    </recommendedName>
    <alternativeName>
        <fullName>Protein ROSULATA</fullName>
    </alternativeName>
</protein>
<keyword id="KW-0217">Developmental protein</keyword>
<keyword id="KW-0221">Differentiation</keyword>
<keyword id="KW-0238">DNA-binding</keyword>
<keyword id="KW-0287">Flowering</keyword>
<keyword id="KW-0371">Homeobox</keyword>
<keyword id="KW-0539">Nucleus</keyword>
<keyword id="KW-0804">Transcription</keyword>
<keyword id="KW-0805">Transcription regulation</keyword>
<evidence type="ECO:0000250" key="1"/>
<evidence type="ECO:0000255" key="2">
    <source>
        <dbReference type="PROSITE-ProRule" id="PRU00108"/>
    </source>
</evidence>
<evidence type="ECO:0000256" key="3">
    <source>
        <dbReference type="SAM" id="MobiDB-lite"/>
    </source>
</evidence>
<evidence type="ECO:0000305" key="4"/>
<proteinExistence type="evidence at transcript level"/>
<feature type="chain" id="PRO_0000049382" description="Protein WUSCHEL">
    <location>
        <begin position="1"/>
        <end position="281"/>
    </location>
</feature>
<feature type="DNA-binding region" description="Homeobox; WUS-type" evidence="2">
    <location>
        <begin position="36"/>
        <end position="101"/>
    </location>
</feature>
<feature type="region of interest" description="Disordered" evidence="3">
    <location>
        <begin position="1"/>
        <end position="38"/>
    </location>
</feature>
<feature type="compositionally biased region" description="Low complexity" evidence="3">
    <location>
        <begin position="1"/>
        <end position="25"/>
    </location>
</feature>
<reference key="1">
    <citation type="submission" date="2002-10" db="EMBL/GenBank/DDBJ databases">
        <title>ROSULATA controls Antirrhinum meristem maintenance.</title>
        <authorList>
            <person name="Kieffer M.L."/>
            <person name="Davies B.H."/>
        </authorList>
    </citation>
    <scope>NUCLEOTIDE SEQUENCE [MRNA]</scope>
    <source>
        <tissue>Flower</tissue>
    </source>
</reference>
<comment type="function">
    <text evidence="1">Transcription factor that plays a central role during developmental processes such as early embryogenesis and flowering, probably by regulating expression of specific genes. Required to specify stem cell identity in meristems, such as shoot apical meristem (SAM). May induce shoot stem cells activity in order to maintain the stem cell identity (By similarity).</text>
</comment>
<comment type="subcellular location">
    <subcellularLocation>
        <location evidence="2">Nucleus</location>
    </subcellularLocation>
</comment>
<comment type="similarity">
    <text evidence="4">Belongs to the WUS homeobox family.</text>
</comment>